<evidence type="ECO:0000250" key="1"/>
<evidence type="ECO:0000255" key="2"/>
<evidence type="ECO:0000255" key="3">
    <source>
        <dbReference type="PROSITE-ProRule" id="PRU00409"/>
    </source>
</evidence>
<evidence type="ECO:0000255" key="4">
    <source>
        <dbReference type="PROSITE-ProRule" id="PRU01066"/>
    </source>
</evidence>
<evidence type="ECO:0000255" key="5">
    <source>
        <dbReference type="PROSITE-ProRule" id="PRU01136"/>
    </source>
</evidence>
<evidence type="ECO:0000255" key="6">
    <source>
        <dbReference type="PROSITE-ProRule" id="PRU01137"/>
    </source>
</evidence>
<evidence type="ECO:0000255" key="7">
    <source>
        <dbReference type="PROSITE-ProRule" id="PRU01138"/>
    </source>
</evidence>
<evidence type="ECO:0000305" key="8"/>
<organism>
    <name type="scientific">Saccharomyces cerevisiae (strain Lalvin EC1118 / Prise de mousse)</name>
    <name type="common">Baker's yeast</name>
    <dbReference type="NCBI Taxonomy" id="643680"/>
    <lineage>
        <taxon>Eukaryota</taxon>
        <taxon>Fungi</taxon>
        <taxon>Dikarya</taxon>
        <taxon>Ascomycota</taxon>
        <taxon>Saccharomycotina</taxon>
        <taxon>Saccharomycetes</taxon>
        <taxon>Saccharomycetales</taxon>
        <taxon>Saccharomycetaceae</taxon>
        <taxon>Saccharomyces</taxon>
    </lineage>
</organism>
<sequence>KGKTITHGQSWGARRIHSHFYITIFTITCIRIGQYKLALYLDPYRFYNITGSQIVRLKGQRPEYRKRIFAHSYRHSSRIGLNFPSRRRYSNYVDRGNIHKHTRLPPQFIGLNTVESAQPSILRDFVDLRGGHTVISKILIANNGIAAVKEMRSIRKWAYETFNDEKIIQFVVMATPDDLHANSEYIRMADQYVQVPGGTNNNNYANIDLILDVAEQTDVDAVWAGWGHASENPCLPELLASSQRKILFIGPPGRAMRSLGDKISSTIVAQSAKIPCIPWSGSHIDTIHIDNKTNFVSVPDDVYVRGCCSSPEDALEKAKLIGFPVMIKASEGGGGKGIRRVDNQDDFIALYRQAVNETPGSPMFVMKVVTDARHLEVQLLADQYGTNITLFGRDCSIQRRHQKIIEEAPVTITKPETFQRMERAAIRLGELVGYVSAGTVEYLYSPKDDKFYFLELNPRLQVEHPTTEMISGVNLPATQLQIAMGIPMHMISDIRKLYGLDPTGTSYIDFKNLKRPSPKGHCISCRITSEDPNEGFKPSTGKIHELNFRSSSNVWGYFSVGNNGAIHSFSDSQFGHIFAVGNDRQDAKQNMVLALKDFSIRGDFKTPIEYLIELLETRDFESNNISTGWLDDLILKNLSSDSKLDPTLAIICGAAMKAYVFTEKVRNKYLELLRRGQVPPKDFLKTKFPVDFIFDNNRYLFNVAQSSEEQFILSINKSQCEVNVQKLSSDCLLISVDGKCHTVYWKDDIRGTRLSIDSNTIFLEAELNPTQVISPTPGKLVKYLVRSGDHVFAGQQYAEMEIMKMQMPLVAKSDGVIELLRQPGSIIEAGDVIAKLTLDSPSKANESSLYRGELPVLGPPLIEGSRPNHKLRVLINRLENILNGYHENSGIETTLKELIKILRDGRLPYSEWDSQISTVRNRLPRQLNEGLGNLVKKSVSFPAKELHKLMKRYLEENTNDHVVYVALQPLLKISERYSEGLANHECEIFLKLIKKYYAVEKIFENHDIHEERNLLNLRRKDLTNLKEILCISLSHANIVAKNKLVTAILHEYEPLCQDSSKMSLKFRAVIHDLASLESKWAKEVSVKARSVLLRGIFPPIKKRKEHIKTLLQLHIKDTGAENIHSRNIYSCMRDFGNLIHSNLIQLQDLFFFFGHQDTALSSIASEIYARYAYGNYQLKSIKIHKGAPDLLMSWQFSSLRNYLVNSDGESDEFTKLSKPPSTSGKSSANSFGLLVNMRALESLEKTLDEVYEQIHIPEERLSSGENSLIVNILSPIRYRSENDLIKTLKIKLHENERGLSKLKVNRITFAFIAANAPAVKFYSFDGTTYDEIPQIRNMDPSYEAPLELGKMSNYKIRSLPTYDSSIRIFEGISKFTPLDKRFFVRKIINSFMYNDQKTTEENLKAEINAQVVYMLEHLGAVDISNSDLNHIFLSFNTVLNIPVHRLEEIVSTILKTHETRLFQERITDVEICISVECLETKKPAPLRLLISNKSGYVVKIETYYEKIGKNGNLILEPCSEQSHYSQKSLSLPYSVKDWLQPKRYKAQFMGTTYVYDFPGLFHQAAIQQWKRYFPKHKLNDSFFSWVELIEQNGNLIKVNREPGLNNIGMVAFEIMVQTPEYPEGRNMIVISNDITYNIGSFGPREDLFFDRVTNYARERGIPRIYLAANSGAKLGIAEELIPLFRVAWNDPSDPTKGFQYLYLAPKDMQLLKDSGKGNSVVVEHKMVYGEERYIIKAIVGFEEGLGVECLQGSGLIAGATSKAYRDIFTITAVTCRSVGIGSYLVRLGQRTIQVEDKPIILTGASAINKVLGTDIYTSNLQIGGTQIMYKNGIAHLTASNDMKAIEKIMTWLSYVPAKRDMSPPLLETMDRWDRDVDFKPAKQVPYEARWLIEGKWDSNNNFQSGLFDKDSFFETLSGWAKGVIVGRARLGGIPVGVIAVETKTIEEIIPADPANLDSSEFSVKEAGQVWYPNSAFKTAQTINDFNYGEQLPLIILANWRGFSGGQRDMYNEVLKYGSFIVDALVDYKQPILIYIPPFGELRGGSWVVIDPTINPEQMEMYADVESRGGVLEPDGVVSIKYRKEKMIETMIRLDSTYGHLRRTLTEKKLSLEKQNDLTKRLKIRERQLIPIYNQISIQFADLHDRSTRMLVKGVIRNELEWKKSRRFLYWRLRRRLNEGQVIKRLQKKTCDNKTKMKYDDLLKIVQSWYNDLDVNDDRAVVEFIERNSKKIDKNIEEFEISLLIDELKKKFEDRRGNIVLEELTRLVDSKRKR</sequence>
<feature type="transit peptide" description="Mitochondrion" evidence="2">
    <location>
        <begin position="1"/>
        <end position="104"/>
    </location>
</feature>
<feature type="chain" id="PRO_0000392102" description="Acetyl-CoA carboxylase, mitochondrial">
    <location>
        <begin position="105"/>
        <end position="2273"/>
    </location>
</feature>
<feature type="domain" description="Biotin carboxylation">
    <location>
        <begin position="134"/>
        <end position="635"/>
    </location>
</feature>
<feature type="domain" description="ATP-grasp" evidence="3">
    <location>
        <begin position="292"/>
        <end position="484"/>
    </location>
</feature>
<feature type="domain" description="Biotinyl-binding" evidence="4">
    <location>
        <begin position="763"/>
        <end position="837"/>
    </location>
</feature>
<feature type="domain" description="CoA carboxyltransferase N-terminal" evidence="5">
    <location>
        <begin position="1532"/>
        <end position="1867"/>
    </location>
</feature>
<feature type="domain" description="CoA carboxyltransferase C-terminal" evidence="6">
    <location>
        <begin position="1871"/>
        <end position="2187"/>
    </location>
</feature>
<feature type="region of interest" description="Carboxyltransferase" evidence="7">
    <location>
        <begin position="1532"/>
        <end position="2187"/>
    </location>
</feature>
<feature type="active site" evidence="1">
    <location>
        <position position="459"/>
    </location>
</feature>
<feature type="binding site" evidence="3">
    <location>
        <begin position="332"/>
        <end position="337"/>
    </location>
    <ligand>
        <name>ATP</name>
        <dbReference type="ChEBI" id="CHEBI:30616"/>
    </ligand>
</feature>
<feature type="binding site" evidence="1">
    <location>
        <position position="1776"/>
    </location>
    <ligand>
        <name>CoA</name>
        <dbReference type="ChEBI" id="CHEBI:57287"/>
    </ligand>
</feature>
<feature type="binding site" evidence="1">
    <location>
        <position position="2080"/>
    </location>
    <ligand>
        <name>CoA</name>
        <dbReference type="ChEBI" id="CHEBI:57287"/>
    </ligand>
</feature>
<feature type="binding site" evidence="1">
    <location>
        <position position="2082"/>
    </location>
    <ligand>
        <name>CoA</name>
        <dbReference type="ChEBI" id="CHEBI:57287"/>
    </ligand>
</feature>
<feature type="modified residue" description="N6-biotinyllysine" evidence="1 4">
    <location>
        <position position="804"/>
    </location>
</feature>
<accession>C8ZF72</accession>
<name>HFA1_YEAS8</name>
<keyword id="KW-0067">ATP-binding</keyword>
<keyword id="KW-0092">Biotin</keyword>
<keyword id="KW-0275">Fatty acid biosynthesis</keyword>
<keyword id="KW-0276">Fatty acid metabolism</keyword>
<keyword id="KW-0436">Ligase</keyword>
<keyword id="KW-0444">Lipid biosynthesis</keyword>
<keyword id="KW-0443">Lipid metabolism</keyword>
<keyword id="KW-0496">Mitochondrion</keyword>
<keyword id="KW-0511">Multifunctional enzyme</keyword>
<keyword id="KW-0547">Nucleotide-binding</keyword>
<keyword id="KW-0809">Transit peptide</keyword>
<dbReference type="EC" id="6.4.1.2"/>
<dbReference type="EC" id="6.3.4.14"/>
<dbReference type="EMBL" id="FN393082">
    <property type="protein sequence ID" value="CAY82038.1"/>
    <property type="status" value="ALT_INIT"/>
    <property type="molecule type" value="Genomic_DNA"/>
</dbReference>
<dbReference type="SMR" id="C8ZF72"/>
<dbReference type="HOGENOM" id="CLU_000395_5_2_1"/>
<dbReference type="OrthoDB" id="24338at4893"/>
<dbReference type="UniPathway" id="UPA00655">
    <property type="reaction ID" value="UER00711"/>
</dbReference>
<dbReference type="Proteomes" id="UP000000286">
    <property type="component" value="Chromosome XIII, Scaffold EC1118_1M3"/>
</dbReference>
<dbReference type="GO" id="GO:0005739">
    <property type="term" value="C:mitochondrion"/>
    <property type="evidence" value="ECO:0007669"/>
    <property type="project" value="UniProtKB-SubCell"/>
</dbReference>
<dbReference type="GO" id="GO:0003989">
    <property type="term" value="F:acetyl-CoA carboxylase activity"/>
    <property type="evidence" value="ECO:0007669"/>
    <property type="project" value="UniProtKB-EC"/>
</dbReference>
<dbReference type="GO" id="GO:0005524">
    <property type="term" value="F:ATP binding"/>
    <property type="evidence" value="ECO:0007669"/>
    <property type="project" value="UniProtKB-KW"/>
</dbReference>
<dbReference type="GO" id="GO:0004075">
    <property type="term" value="F:biotin carboxylase activity"/>
    <property type="evidence" value="ECO:0007669"/>
    <property type="project" value="UniProtKB-EC"/>
</dbReference>
<dbReference type="GO" id="GO:0046872">
    <property type="term" value="F:metal ion binding"/>
    <property type="evidence" value="ECO:0007669"/>
    <property type="project" value="InterPro"/>
</dbReference>
<dbReference type="GO" id="GO:0006633">
    <property type="term" value="P:fatty acid biosynthetic process"/>
    <property type="evidence" value="ECO:0007669"/>
    <property type="project" value="UniProtKB-KW"/>
</dbReference>
<dbReference type="GO" id="GO:2001295">
    <property type="term" value="P:malonyl-CoA biosynthetic process"/>
    <property type="evidence" value="ECO:0007669"/>
    <property type="project" value="UniProtKB-UniPathway"/>
</dbReference>
<dbReference type="CDD" id="cd06850">
    <property type="entry name" value="biotinyl_domain"/>
    <property type="match status" value="1"/>
</dbReference>
<dbReference type="FunFam" id="2.40.460.10:FF:000001">
    <property type="entry name" value="Acetyl-CoA carboxylase 1"/>
    <property type="match status" value="1"/>
</dbReference>
<dbReference type="FunFam" id="2.40.50.100:FF:000005">
    <property type="entry name" value="Acetyl-CoA carboxylase 1"/>
    <property type="match status" value="1"/>
</dbReference>
<dbReference type="FunFam" id="3.30.470.20:FF:000005">
    <property type="entry name" value="Acetyl-CoA carboxylase 1"/>
    <property type="match status" value="1"/>
</dbReference>
<dbReference type="FunFam" id="3.90.1770.10:FF:000001">
    <property type="entry name" value="acetyl-CoA carboxylase 1"/>
    <property type="match status" value="1"/>
</dbReference>
<dbReference type="FunFam" id="3.30.1490.20:FF:000003">
    <property type="entry name" value="acetyl-CoA carboxylase isoform X1"/>
    <property type="match status" value="1"/>
</dbReference>
<dbReference type="FunFam" id="3.40.50.20:FF:000005">
    <property type="entry name" value="acetyl-CoA carboxylase isoform X2"/>
    <property type="match status" value="1"/>
</dbReference>
<dbReference type="FunFam" id="3.90.226.10:FF:000010">
    <property type="entry name" value="acetyl-CoA carboxylase isoform X2"/>
    <property type="match status" value="1"/>
</dbReference>
<dbReference type="Gene3D" id="2.40.50.100">
    <property type="match status" value="1"/>
</dbReference>
<dbReference type="Gene3D" id="3.40.50.20">
    <property type="match status" value="1"/>
</dbReference>
<dbReference type="Gene3D" id="3.90.226.10">
    <property type="entry name" value="2-enoyl-CoA Hydratase, Chain A, domain 1"/>
    <property type="match status" value="2"/>
</dbReference>
<dbReference type="Gene3D" id="3.30.1490.20">
    <property type="entry name" value="ATP-grasp fold, A domain"/>
    <property type="match status" value="1"/>
</dbReference>
<dbReference type="Gene3D" id="3.30.470.20">
    <property type="entry name" value="ATP-grasp fold, B domain"/>
    <property type="match status" value="1"/>
</dbReference>
<dbReference type="Gene3D" id="2.40.460.10">
    <property type="entry name" value="Biotin dependent carboxylase carboxyltransferase"/>
    <property type="match status" value="1"/>
</dbReference>
<dbReference type="Gene3D" id="3.90.1770.10">
    <property type="entry name" value="PreATP-grasp domain"/>
    <property type="match status" value="1"/>
</dbReference>
<dbReference type="InterPro" id="IPR049076">
    <property type="entry name" value="ACCA"/>
</dbReference>
<dbReference type="InterPro" id="IPR049074">
    <property type="entry name" value="ACCA_BT"/>
</dbReference>
<dbReference type="InterPro" id="IPR034733">
    <property type="entry name" value="AcCoA_carboxyl_beta"/>
</dbReference>
<dbReference type="InterPro" id="IPR013537">
    <property type="entry name" value="AcCoA_COase_cen"/>
</dbReference>
<dbReference type="InterPro" id="IPR011761">
    <property type="entry name" value="ATP-grasp"/>
</dbReference>
<dbReference type="InterPro" id="IPR013815">
    <property type="entry name" value="ATP_grasp_subdomain_1"/>
</dbReference>
<dbReference type="InterPro" id="IPR005481">
    <property type="entry name" value="BC-like_N"/>
</dbReference>
<dbReference type="InterPro" id="IPR001882">
    <property type="entry name" value="Biotin_BS"/>
</dbReference>
<dbReference type="InterPro" id="IPR011764">
    <property type="entry name" value="Biotin_carboxylation_dom"/>
</dbReference>
<dbReference type="InterPro" id="IPR005482">
    <property type="entry name" value="Biotin_COase_C"/>
</dbReference>
<dbReference type="InterPro" id="IPR000089">
    <property type="entry name" value="Biotin_lipoyl"/>
</dbReference>
<dbReference type="InterPro" id="IPR005479">
    <property type="entry name" value="CbamoylP_synth_lsu-like_ATP-bd"/>
</dbReference>
<dbReference type="InterPro" id="IPR029045">
    <property type="entry name" value="ClpP/crotonase-like_dom_sf"/>
</dbReference>
<dbReference type="InterPro" id="IPR011763">
    <property type="entry name" value="COA_CT_C"/>
</dbReference>
<dbReference type="InterPro" id="IPR011762">
    <property type="entry name" value="COA_CT_N"/>
</dbReference>
<dbReference type="InterPro" id="IPR016185">
    <property type="entry name" value="PreATP-grasp_dom_sf"/>
</dbReference>
<dbReference type="InterPro" id="IPR011054">
    <property type="entry name" value="Rudment_hybrid_motif"/>
</dbReference>
<dbReference type="InterPro" id="IPR011053">
    <property type="entry name" value="Single_hybrid_motif"/>
</dbReference>
<dbReference type="PANTHER" id="PTHR45728:SF3">
    <property type="entry name" value="ACETYL-COA CARBOXYLASE"/>
    <property type="match status" value="1"/>
</dbReference>
<dbReference type="PANTHER" id="PTHR45728">
    <property type="entry name" value="ACETYL-COA CARBOXYLASE, ISOFORM A"/>
    <property type="match status" value="1"/>
</dbReference>
<dbReference type="Pfam" id="PF08326">
    <property type="entry name" value="ACC_central"/>
    <property type="match status" value="1"/>
</dbReference>
<dbReference type="Pfam" id="PF21385">
    <property type="entry name" value="ACCA_BT"/>
    <property type="match status" value="1"/>
</dbReference>
<dbReference type="Pfam" id="PF02785">
    <property type="entry name" value="Biotin_carb_C"/>
    <property type="match status" value="1"/>
</dbReference>
<dbReference type="Pfam" id="PF00289">
    <property type="entry name" value="Biotin_carb_N"/>
    <property type="match status" value="1"/>
</dbReference>
<dbReference type="Pfam" id="PF00364">
    <property type="entry name" value="Biotin_lipoyl"/>
    <property type="match status" value="1"/>
</dbReference>
<dbReference type="Pfam" id="PF01039">
    <property type="entry name" value="Carboxyl_trans"/>
    <property type="match status" value="1"/>
</dbReference>
<dbReference type="Pfam" id="PF02786">
    <property type="entry name" value="CPSase_L_D2"/>
    <property type="match status" value="1"/>
</dbReference>
<dbReference type="SMART" id="SM00878">
    <property type="entry name" value="Biotin_carb_C"/>
    <property type="match status" value="1"/>
</dbReference>
<dbReference type="SUPFAM" id="SSF52096">
    <property type="entry name" value="ClpP/crotonase"/>
    <property type="match status" value="2"/>
</dbReference>
<dbReference type="SUPFAM" id="SSF56059">
    <property type="entry name" value="Glutathione synthetase ATP-binding domain-like"/>
    <property type="match status" value="1"/>
</dbReference>
<dbReference type="SUPFAM" id="SSF52440">
    <property type="entry name" value="PreATP-grasp domain"/>
    <property type="match status" value="1"/>
</dbReference>
<dbReference type="SUPFAM" id="SSF51246">
    <property type="entry name" value="Rudiment single hybrid motif"/>
    <property type="match status" value="1"/>
</dbReference>
<dbReference type="SUPFAM" id="SSF51230">
    <property type="entry name" value="Single hybrid motif"/>
    <property type="match status" value="1"/>
</dbReference>
<dbReference type="PROSITE" id="PS50975">
    <property type="entry name" value="ATP_GRASP"/>
    <property type="match status" value="1"/>
</dbReference>
<dbReference type="PROSITE" id="PS50979">
    <property type="entry name" value="BC"/>
    <property type="match status" value="1"/>
</dbReference>
<dbReference type="PROSITE" id="PS00188">
    <property type="entry name" value="BIOTIN"/>
    <property type="match status" value="1"/>
</dbReference>
<dbReference type="PROSITE" id="PS50968">
    <property type="entry name" value="BIOTINYL_LIPOYL"/>
    <property type="match status" value="1"/>
</dbReference>
<dbReference type="PROSITE" id="PS50989">
    <property type="entry name" value="COA_CT_CTER"/>
    <property type="match status" value="1"/>
</dbReference>
<dbReference type="PROSITE" id="PS50980">
    <property type="entry name" value="COA_CT_NTER"/>
    <property type="match status" value="1"/>
</dbReference>
<dbReference type="PROSITE" id="PS00866">
    <property type="entry name" value="CPSASE_1"/>
    <property type="match status" value="1"/>
</dbReference>
<dbReference type="PROSITE" id="PS00867">
    <property type="entry name" value="CPSASE_2"/>
    <property type="match status" value="1"/>
</dbReference>
<proteinExistence type="inferred from homology"/>
<gene>
    <name type="primary">HFA1</name>
    <name type="ORF">EC1118_1M3_4049g</name>
</gene>
<reference key="1">
    <citation type="journal article" date="2009" name="Proc. Natl. Acad. Sci. U.S.A.">
        <title>Eukaryote-to-eukaryote gene transfer events revealed by the genome sequence of the wine yeast Saccharomyces cerevisiae EC1118.</title>
        <authorList>
            <person name="Novo M."/>
            <person name="Bigey F."/>
            <person name="Beyne E."/>
            <person name="Galeote V."/>
            <person name="Gavory F."/>
            <person name="Mallet S."/>
            <person name="Cambon B."/>
            <person name="Legras J.-L."/>
            <person name="Wincker P."/>
            <person name="Casaregola S."/>
            <person name="Dequin S."/>
        </authorList>
    </citation>
    <scope>NUCLEOTIDE SEQUENCE [LARGE SCALE GENOMIC DNA]</scope>
    <source>
        <strain>Lalvin EC1118 / Prise de mousse</strain>
    </source>
</reference>
<protein>
    <recommendedName>
        <fullName>Acetyl-CoA carboxylase, mitochondrial</fullName>
        <shortName>ACC</shortName>
        <ecNumber>6.4.1.2</ecNumber>
    </recommendedName>
    <domain>
        <recommendedName>
            <fullName>Biotin carboxylase</fullName>
            <ecNumber>6.3.4.14</ecNumber>
        </recommendedName>
    </domain>
</protein>
<comment type="function">
    <text evidence="1">Catalyzes the rate-limiting reaction in the mitochondrial fatty acid synthesis (FAS) type II pathway. Responsible for the production of the mitochondrial malonyl-CoA, used for the biosynthesis of the cofactor lipoic acid. This protein carries three functions: biotin carboxyl carrier protein, biotin carboxylase, and carboxyltransferase (By similarity).</text>
</comment>
<comment type="catalytic activity">
    <reaction>
        <text>hydrogencarbonate + acetyl-CoA + ATP = malonyl-CoA + ADP + phosphate + H(+)</text>
        <dbReference type="Rhea" id="RHEA:11308"/>
        <dbReference type="ChEBI" id="CHEBI:15378"/>
        <dbReference type="ChEBI" id="CHEBI:17544"/>
        <dbReference type="ChEBI" id="CHEBI:30616"/>
        <dbReference type="ChEBI" id="CHEBI:43474"/>
        <dbReference type="ChEBI" id="CHEBI:57288"/>
        <dbReference type="ChEBI" id="CHEBI:57384"/>
        <dbReference type="ChEBI" id="CHEBI:456216"/>
        <dbReference type="EC" id="6.4.1.2"/>
    </reaction>
</comment>
<comment type="catalytic activity">
    <reaction>
        <text>N(6)-biotinyl-L-lysyl-[protein] + hydrogencarbonate + ATP = N(6)-carboxybiotinyl-L-lysyl-[protein] + ADP + phosphate + H(+)</text>
        <dbReference type="Rhea" id="RHEA:13501"/>
        <dbReference type="Rhea" id="RHEA-COMP:10505"/>
        <dbReference type="Rhea" id="RHEA-COMP:10506"/>
        <dbReference type="ChEBI" id="CHEBI:15378"/>
        <dbReference type="ChEBI" id="CHEBI:17544"/>
        <dbReference type="ChEBI" id="CHEBI:30616"/>
        <dbReference type="ChEBI" id="CHEBI:43474"/>
        <dbReference type="ChEBI" id="CHEBI:83144"/>
        <dbReference type="ChEBI" id="CHEBI:83145"/>
        <dbReference type="ChEBI" id="CHEBI:456216"/>
        <dbReference type="EC" id="6.3.4.14"/>
    </reaction>
</comment>
<comment type="cofactor">
    <cofactor evidence="1">
        <name>biotin</name>
        <dbReference type="ChEBI" id="CHEBI:57586"/>
    </cofactor>
</comment>
<comment type="pathway">
    <text>Lipid metabolism; malonyl-CoA biosynthesis; malonyl-CoA from acetyl-CoA: step 1/1.</text>
</comment>
<comment type="subcellular location">
    <subcellularLocation>
        <location evidence="1">Mitochondrion</location>
    </subcellularLocation>
</comment>
<comment type="caution">
    <text evidence="8">The reading frame from which this protein is translated has no Met initiation codon near to the 5'-end. However, it is not a pseudogene. It has been shown that at least 72 residues upstream of the first in-frame start codon (Met-151) are required for function and proper subcellular location. May be translated by means of alternative initiation codon usage, programmed translational frame shifting, or mRNA editing.</text>
</comment>
<comment type="sequence caution" evidence="8">
    <conflict type="erroneous initiation">
        <sequence resource="EMBL-CDS" id="CAY82038"/>
    </conflict>
</comment>